<reference key="1">
    <citation type="journal article" date="2002" name="J. Bacteriol.">
        <title>Genome sequence and analysis of the oral bacterium Fusobacterium nucleatum strain ATCC 25586.</title>
        <authorList>
            <person name="Kapatral V."/>
            <person name="Anderson I."/>
            <person name="Ivanova N."/>
            <person name="Reznik G."/>
            <person name="Los T."/>
            <person name="Lykidis A."/>
            <person name="Bhattacharyya A."/>
            <person name="Bartman A."/>
            <person name="Gardner W."/>
            <person name="Grechkin G."/>
            <person name="Zhu L."/>
            <person name="Vasieva O."/>
            <person name="Chu L."/>
            <person name="Kogan Y."/>
            <person name="Chaga O."/>
            <person name="Goltsman E."/>
            <person name="Bernal A."/>
            <person name="Larsen N."/>
            <person name="D'Souza M."/>
            <person name="Walunas T."/>
            <person name="Pusch G."/>
            <person name="Haselkorn R."/>
            <person name="Fonstein M."/>
            <person name="Kyrpides N.C."/>
            <person name="Overbeek R."/>
        </authorList>
    </citation>
    <scope>NUCLEOTIDE SEQUENCE [LARGE SCALE GENOMIC DNA]</scope>
    <source>
        <strain>ATCC 25586 / DSM 15643 / BCRC 10681 / CIP 101130 / JCM 8532 / KCTC 2640 / LMG 13131 / VPI 4355</strain>
    </source>
</reference>
<name>ACCA_FUSNN</name>
<feature type="chain" id="PRO_0000223770" description="Acetyl-coenzyme A carboxylase carboxyl transferase subunit alpha">
    <location>
        <begin position="1"/>
        <end position="313"/>
    </location>
</feature>
<feature type="domain" description="CoA carboxyltransferase C-terminal" evidence="2">
    <location>
        <begin position="34"/>
        <end position="288"/>
    </location>
</feature>
<accession>Q8RG99</accession>
<proteinExistence type="inferred from homology"/>
<organism>
    <name type="scientific">Fusobacterium nucleatum subsp. nucleatum (strain ATCC 25586 / DSM 15643 / BCRC 10681 / CIP 101130 / JCM 8532 / KCTC 2640 / LMG 13131 / VPI 4355)</name>
    <dbReference type="NCBI Taxonomy" id="190304"/>
    <lineage>
        <taxon>Bacteria</taxon>
        <taxon>Fusobacteriati</taxon>
        <taxon>Fusobacteriota</taxon>
        <taxon>Fusobacteriia</taxon>
        <taxon>Fusobacteriales</taxon>
        <taxon>Fusobacteriaceae</taxon>
        <taxon>Fusobacterium</taxon>
    </lineage>
</organism>
<evidence type="ECO:0000255" key="1">
    <source>
        <dbReference type="HAMAP-Rule" id="MF_00823"/>
    </source>
</evidence>
<evidence type="ECO:0000255" key="2">
    <source>
        <dbReference type="PROSITE-ProRule" id="PRU01137"/>
    </source>
</evidence>
<sequence length="313" mass="35303">MQFEFQIEELEHKIEELKKFAEEKEVDLSDEIAKLKDQRDIALKVLYDDLTDYQRVMVSRHPERPYTLDYINYITTDFIELHGDRLFRDDPAIVGGLCKIDGKNFMIIGHQKGRTMQEKVFRNFGMANPEGYRKALRLYEMAERFKLPILTFIDTPGAYPGLEAEKHGQGEAIARNLMEMSGIKTPIVSIVIGEGGSGGALGLGVADKVFMLENSVYSVISPEGCAAILYKDPNRVEEAANNLKLSSQSLLKIGLIDGIIDEALGGAHRGPEDTAFNLKNVVLEAVNELEKLPVDELVEKRYEKFRQMGVFNR</sequence>
<gene>
    <name evidence="1" type="primary">accA</name>
    <name type="ordered locus">FN0409</name>
</gene>
<comment type="function">
    <text evidence="1">Component of the acetyl coenzyme A carboxylase (ACC) complex. First, biotin carboxylase catalyzes the carboxylation of biotin on its carrier protein (BCCP) and then the CO(2) group is transferred by the carboxyltransferase to acetyl-CoA to form malonyl-CoA.</text>
</comment>
<comment type="catalytic activity">
    <reaction evidence="1">
        <text>N(6)-carboxybiotinyl-L-lysyl-[protein] + acetyl-CoA = N(6)-biotinyl-L-lysyl-[protein] + malonyl-CoA</text>
        <dbReference type="Rhea" id="RHEA:54728"/>
        <dbReference type="Rhea" id="RHEA-COMP:10505"/>
        <dbReference type="Rhea" id="RHEA-COMP:10506"/>
        <dbReference type="ChEBI" id="CHEBI:57288"/>
        <dbReference type="ChEBI" id="CHEBI:57384"/>
        <dbReference type="ChEBI" id="CHEBI:83144"/>
        <dbReference type="ChEBI" id="CHEBI:83145"/>
        <dbReference type="EC" id="2.1.3.15"/>
    </reaction>
</comment>
<comment type="pathway">
    <text evidence="1">Lipid metabolism; malonyl-CoA biosynthesis; malonyl-CoA from acetyl-CoA: step 1/1.</text>
</comment>
<comment type="subunit">
    <text evidence="1">Acetyl-CoA carboxylase is a heterohexamer composed of biotin carboxyl carrier protein (AccB), biotin carboxylase (AccC) and two subunits each of ACCase subunit alpha (AccA) and ACCase subunit beta (AccD).</text>
</comment>
<comment type="subcellular location">
    <subcellularLocation>
        <location evidence="1">Cytoplasm</location>
    </subcellularLocation>
</comment>
<comment type="similarity">
    <text evidence="1">Belongs to the AccA family.</text>
</comment>
<keyword id="KW-0067">ATP-binding</keyword>
<keyword id="KW-0963">Cytoplasm</keyword>
<keyword id="KW-0275">Fatty acid biosynthesis</keyword>
<keyword id="KW-0276">Fatty acid metabolism</keyword>
<keyword id="KW-0444">Lipid biosynthesis</keyword>
<keyword id="KW-0443">Lipid metabolism</keyword>
<keyword id="KW-0547">Nucleotide-binding</keyword>
<keyword id="KW-1185">Reference proteome</keyword>
<keyword id="KW-0808">Transferase</keyword>
<dbReference type="EC" id="2.1.3.15" evidence="1"/>
<dbReference type="EMBL" id="AE009951">
    <property type="protein sequence ID" value="AAL94612.1"/>
    <property type="molecule type" value="Genomic_DNA"/>
</dbReference>
<dbReference type="RefSeq" id="NP_603313.1">
    <property type="nucleotide sequence ID" value="NC_003454.1"/>
</dbReference>
<dbReference type="RefSeq" id="WP_011016368.1">
    <property type="nucleotide sequence ID" value="NZ_CP028101.1"/>
</dbReference>
<dbReference type="SMR" id="Q8RG99"/>
<dbReference type="FunCoup" id="Q8RG99">
    <property type="interactions" value="203"/>
</dbReference>
<dbReference type="STRING" id="190304.FN0409"/>
<dbReference type="PaxDb" id="190304-FN0409"/>
<dbReference type="EnsemblBacteria" id="AAL94612">
    <property type="protein sequence ID" value="AAL94612"/>
    <property type="gene ID" value="FN0409"/>
</dbReference>
<dbReference type="GeneID" id="79783415"/>
<dbReference type="KEGG" id="fnu:FN0409"/>
<dbReference type="PATRIC" id="fig|190304.8.peg.984"/>
<dbReference type="eggNOG" id="COG0825">
    <property type="taxonomic scope" value="Bacteria"/>
</dbReference>
<dbReference type="HOGENOM" id="CLU_015486_0_2_0"/>
<dbReference type="InParanoid" id="Q8RG99"/>
<dbReference type="BioCyc" id="FNUC190304:G1FZS-1003-MONOMER"/>
<dbReference type="UniPathway" id="UPA00655">
    <property type="reaction ID" value="UER00711"/>
</dbReference>
<dbReference type="Proteomes" id="UP000002521">
    <property type="component" value="Chromosome"/>
</dbReference>
<dbReference type="GO" id="GO:0009317">
    <property type="term" value="C:acetyl-CoA carboxylase complex"/>
    <property type="evidence" value="ECO:0007669"/>
    <property type="project" value="InterPro"/>
</dbReference>
<dbReference type="GO" id="GO:0003989">
    <property type="term" value="F:acetyl-CoA carboxylase activity"/>
    <property type="evidence" value="ECO:0007669"/>
    <property type="project" value="InterPro"/>
</dbReference>
<dbReference type="GO" id="GO:0005524">
    <property type="term" value="F:ATP binding"/>
    <property type="evidence" value="ECO:0007669"/>
    <property type="project" value="UniProtKB-KW"/>
</dbReference>
<dbReference type="GO" id="GO:0016743">
    <property type="term" value="F:carboxyl- or carbamoyltransferase activity"/>
    <property type="evidence" value="ECO:0007669"/>
    <property type="project" value="UniProtKB-UniRule"/>
</dbReference>
<dbReference type="GO" id="GO:0006633">
    <property type="term" value="P:fatty acid biosynthetic process"/>
    <property type="evidence" value="ECO:0007669"/>
    <property type="project" value="UniProtKB-KW"/>
</dbReference>
<dbReference type="GO" id="GO:2001295">
    <property type="term" value="P:malonyl-CoA biosynthetic process"/>
    <property type="evidence" value="ECO:0007669"/>
    <property type="project" value="UniProtKB-UniRule"/>
</dbReference>
<dbReference type="Gene3D" id="3.90.226.10">
    <property type="entry name" value="2-enoyl-CoA Hydratase, Chain A, domain 1"/>
    <property type="match status" value="1"/>
</dbReference>
<dbReference type="HAMAP" id="MF_00823">
    <property type="entry name" value="AcetylCoA_CT_alpha"/>
    <property type="match status" value="1"/>
</dbReference>
<dbReference type="InterPro" id="IPR001095">
    <property type="entry name" value="Acetyl_CoA_COase_a_su"/>
</dbReference>
<dbReference type="InterPro" id="IPR029045">
    <property type="entry name" value="ClpP/crotonase-like_dom_sf"/>
</dbReference>
<dbReference type="InterPro" id="IPR011763">
    <property type="entry name" value="COA_CT_C"/>
</dbReference>
<dbReference type="NCBIfam" id="TIGR00513">
    <property type="entry name" value="accA"/>
    <property type="match status" value="1"/>
</dbReference>
<dbReference type="NCBIfam" id="NF041504">
    <property type="entry name" value="AccA_sub"/>
    <property type="match status" value="1"/>
</dbReference>
<dbReference type="NCBIfam" id="NF004344">
    <property type="entry name" value="PRK05724.1"/>
    <property type="match status" value="1"/>
</dbReference>
<dbReference type="PANTHER" id="PTHR42853">
    <property type="entry name" value="ACETYL-COENZYME A CARBOXYLASE CARBOXYL TRANSFERASE SUBUNIT ALPHA"/>
    <property type="match status" value="1"/>
</dbReference>
<dbReference type="PANTHER" id="PTHR42853:SF3">
    <property type="entry name" value="ACETYL-COENZYME A CARBOXYLASE CARBOXYL TRANSFERASE SUBUNIT ALPHA, CHLOROPLASTIC"/>
    <property type="match status" value="1"/>
</dbReference>
<dbReference type="Pfam" id="PF03255">
    <property type="entry name" value="ACCA"/>
    <property type="match status" value="1"/>
</dbReference>
<dbReference type="PRINTS" id="PR01069">
    <property type="entry name" value="ACCCTRFRASEA"/>
</dbReference>
<dbReference type="SUPFAM" id="SSF52096">
    <property type="entry name" value="ClpP/crotonase"/>
    <property type="match status" value="1"/>
</dbReference>
<dbReference type="PROSITE" id="PS50989">
    <property type="entry name" value="COA_CT_CTER"/>
    <property type="match status" value="1"/>
</dbReference>
<protein>
    <recommendedName>
        <fullName evidence="1">Acetyl-coenzyme A carboxylase carboxyl transferase subunit alpha</fullName>
        <shortName evidence="1">ACCase subunit alpha</shortName>
        <shortName evidence="1">Acetyl-CoA carboxylase carboxyltransferase subunit alpha</shortName>
        <ecNumber evidence="1">2.1.3.15</ecNumber>
    </recommendedName>
</protein>